<dbReference type="EC" id="3.6.4.13"/>
<dbReference type="EMBL" id="BA000055">
    <property type="protein sequence ID" value="BAE65293.1"/>
    <property type="molecule type" value="Genomic_DNA"/>
</dbReference>
<dbReference type="SMR" id="Q2TZH2"/>
<dbReference type="STRING" id="510516.Q2TZH2"/>
<dbReference type="EnsemblFungi" id="BAE65293">
    <property type="protein sequence ID" value="BAE65293"/>
    <property type="gene ID" value="AO090011000853"/>
</dbReference>
<dbReference type="HOGENOM" id="CLU_003041_18_0_1"/>
<dbReference type="OMA" id="HSTIDFI"/>
<dbReference type="Proteomes" id="UP000006564">
    <property type="component" value="Chromosome 7"/>
</dbReference>
<dbReference type="GO" id="GO:0005739">
    <property type="term" value="C:mitochondrion"/>
    <property type="evidence" value="ECO:0007669"/>
    <property type="project" value="UniProtKB-SubCell"/>
</dbReference>
<dbReference type="GO" id="GO:0005524">
    <property type="term" value="F:ATP binding"/>
    <property type="evidence" value="ECO:0007669"/>
    <property type="project" value="UniProtKB-KW"/>
</dbReference>
<dbReference type="GO" id="GO:0016887">
    <property type="term" value="F:ATP hydrolysis activity"/>
    <property type="evidence" value="ECO:0007669"/>
    <property type="project" value="RHEA"/>
</dbReference>
<dbReference type="GO" id="GO:0003723">
    <property type="term" value="F:RNA binding"/>
    <property type="evidence" value="ECO:0007669"/>
    <property type="project" value="UniProtKB-KW"/>
</dbReference>
<dbReference type="GO" id="GO:0003724">
    <property type="term" value="F:RNA helicase activity"/>
    <property type="evidence" value="ECO:0007669"/>
    <property type="project" value="UniProtKB-EC"/>
</dbReference>
<dbReference type="CDD" id="cd18787">
    <property type="entry name" value="SF2_C_DEAD"/>
    <property type="match status" value="1"/>
</dbReference>
<dbReference type="Gene3D" id="3.40.50.300">
    <property type="entry name" value="P-loop containing nucleotide triphosphate hydrolases"/>
    <property type="match status" value="2"/>
</dbReference>
<dbReference type="InterPro" id="IPR011545">
    <property type="entry name" value="DEAD/DEAH_box_helicase_dom"/>
</dbReference>
<dbReference type="InterPro" id="IPR014001">
    <property type="entry name" value="Helicase_ATP-bd"/>
</dbReference>
<dbReference type="InterPro" id="IPR001650">
    <property type="entry name" value="Helicase_C-like"/>
</dbReference>
<dbReference type="InterPro" id="IPR027417">
    <property type="entry name" value="P-loop_NTPase"/>
</dbReference>
<dbReference type="PANTHER" id="PTHR47960">
    <property type="entry name" value="DEAD-BOX ATP-DEPENDENT RNA HELICASE 50"/>
    <property type="match status" value="1"/>
</dbReference>
<dbReference type="Pfam" id="PF00270">
    <property type="entry name" value="DEAD"/>
    <property type="match status" value="1"/>
</dbReference>
<dbReference type="Pfam" id="PF00271">
    <property type="entry name" value="Helicase_C"/>
    <property type="match status" value="1"/>
</dbReference>
<dbReference type="SMART" id="SM00487">
    <property type="entry name" value="DEXDc"/>
    <property type="match status" value="1"/>
</dbReference>
<dbReference type="SMART" id="SM00490">
    <property type="entry name" value="HELICc"/>
    <property type="match status" value="1"/>
</dbReference>
<dbReference type="SUPFAM" id="SSF52540">
    <property type="entry name" value="P-loop containing nucleoside triphosphate hydrolases"/>
    <property type="match status" value="1"/>
</dbReference>
<dbReference type="PROSITE" id="PS51192">
    <property type="entry name" value="HELICASE_ATP_BIND_1"/>
    <property type="match status" value="1"/>
</dbReference>
<dbReference type="PROSITE" id="PS51194">
    <property type="entry name" value="HELICASE_CTER"/>
    <property type="match status" value="1"/>
</dbReference>
<dbReference type="PROSITE" id="PS51195">
    <property type="entry name" value="Q_MOTIF"/>
    <property type="match status" value="1"/>
</dbReference>
<gene>
    <name type="primary">mrh4</name>
    <name type="ORF">AO090011000853</name>
</gene>
<keyword id="KW-0067">ATP-binding</keyword>
<keyword id="KW-0347">Helicase</keyword>
<keyword id="KW-0378">Hydrolase</keyword>
<keyword id="KW-0496">Mitochondrion</keyword>
<keyword id="KW-0547">Nucleotide-binding</keyword>
<keyword id="KW-1185">Reference proteome</keyword>
<keyword id="KW-0694">RNA-binding</keyword>
<keyword id="KW-0809">Transit peptide</keyword>
<reference key="1">
    <citation type="journal article" date="2005" name="Nature">
        <title>Genome sequencing and analysis of Aspergillus oryzae.</title>
        <authorList>
            <person name="Machida M."/>
            <person name="Asai K."/>
            <person name="Sano M."/>
            <person name="Tanaka T."/>
            <person name="Kumagai T."/>
            <person name="Terai G."/>
            <person name="Kusumoto K."/>
            <person name="Arima T."/>
            <person name="Akita O."/>
            <person name="Kashiwagi Y."/>
            <person name="Abe K."/>
            <person name="Gomi K."/>
            <person name="Horiuchi H."/>
            <person name="Kitamoto K."/>
            <person name="Kobayashi T."/>
            <person name="Takeuchi M."/>
            <person name="Denning D.W."/>
            <person name="Galagan J.E."/>
            <person name="Nierman W.C."/>
            <person name="Yu J."/>
            <person name="Archer D.B."/>
            <person name="Bennett J.W."/>
            <person name="Bhatnagar D."/>
            <person name="Cleveland T.E."/>
            <person name="Fedorova N.D."/>
            <person name="Gotoh O."/>
            <person name="Horikawa H."/>
            <person name="Hosoyama A."/>
            <person name="Ichinomiya M."/>
            <person name="Igarashi R."/>
            <person name="Iwashita K."/>
            <person name="Juvvadi P.R."/>
            <person name="Kato M."/>
            <person name="Kato Y."/>
            <person name="Kin T."/>
            <person name="Kokubun A."/>
            <person name="Maeda H."/>
            <person name="Maeyama N."/>
            <person name="Maruyama J."/>
            <person name="Nagasaki H."/>
            <person name="Nakajima T."/>
            <person name="Oda K."/>
            <person name="Okada K."/>
            <person name="Paulsen I."/>
            <person name="Sakamoto K."/>
            <person name="Sawano T."/>
            <person name="Takahashi M."/>
            <person name="Takase K."/>
            <person name="Terabayashi Y."/>
            <person name="Wortman J.R."/>
            <person name="Yamada O."/>
            <person name="Yamagata Y."/>
            <person name="Anazawa H."/>
            <person name="Hata Y."/>
            <person name="Koide Y."/>
            <person name="Komori T."/>
            <person name="Koyama Y."/>
            <person name="Minetoki T."/>
            <person name="Suharnan S."/>
            <person name="Tanaka A."/>
            <person name="Isono K."/>
            <person name="Kuhara S."/>
            <person name="Ogasawara N."/>
            <person name="Kikuchi H."/>
        </authorList>
    </citation>
    <scope>NUCLEOTIDE SEQUENCE [LARGE SCALE GENOMIC DNA]</scope>
    <source>
        <strain>ATCC 42149 / RIB 40</strain>
    </source>
</reference>
<sequence>MSLAVRPPVCLLCRSGAPTLLPSSVSQVARSMATARLRRKVARMALSPDVAKSSINQKRSGKAKFGPWSGMNQTEAHIRGEPRSRSQAALRRSGEKAADTPRKSDSPLYKALKMQTTLAPVPYGRRTAVKSKIADITSFDHFPLLPVVRHSIFSQALPGLVDVTPTPIQRLAIPKLMEDSPDGKRGTKLEDGDPQYDQYLLAAETGSGKTLAYLLPLVDAVKRLEVEDKENERKEEERKAKEKEERLKNRAFDLEPEEPPLSNAGRPRVIILVPTSELVAQVGVKVKALAHTVKYRSGMISSNLTPRRIKSTLFNPDGIDILVSTPHLLASIAKTEPYVLSRVSHLVLDEADSLMDRSFLPTTTEIISKVAPSLRKLILCSATIPRSLDNLLRKRYPDIKRLTTPNLHAIPRRVQLGVVDIQKEPYRGNRNLACADVIWSIGKAGDSEPSEPFASYVGPNIKKILVFVNEREEADEVAQFLRSKGIDAQSLSRDSSARKQEEILAEFTESAPPPSPEEIMLAQKKRRQEDAIPFELPENHNKPENVRRLANTKVLVTTDLASRGIDTLPVKTVILYHVPHTTIDFIHRLGRLGRMNKRGRGIVLVGKKDRKDVVKEVREGMFRGQALI</sequence>
<accession>Q2TZH2</accession>
<protein>
    <recommendedName>
        <fullName>ATP-dependent RNA helicase mrh4, mitochondrial</fullName>
        <ecNumber>3.6.4.13</ecNumber>
    </recommendedName>
</protein>
<comment type="function">
    <text evidence="1">ATP-binding RNA helicase involved in mitochondrial RNA metabolism. Required for maintenance of mitochondrial DNA (By similarity).</text>
</comment>
<comment type="catalytic activity">
    <reaction>
        <text>ATP + H2O = ADP + phosphate + H(+)</text>
        <dbReference type="Rhea" id="RHEA:13065"/>
        <dbReference type="ChEBI" id="CHEBI:15377"/>
        <dbReference type="ChEBI" id="CHEBI:15378"/>
        <dbReference type="ChEBI" id="CHEBI:30616"/>
        <dbReference type="ChEBI" id="CHEBI:43474"/>
        <dbReference type="ChEBI" id="CHEBI:456216"/>
        <dbReference type="EC" id="3.6.4.13"/>
    </reaction>
</comment>
<comment type="subcellular location">
    <subcellularLocation>
        <location evidence="1">Mitochondrion</location>
    </subcellularLocation>
</comment>
<comment type="domain">
    <text>The Q motif is unique to and characteristic of the DEAD box family of RNA helicases and controls ATP binding and hydrolysis.</text>
</comment>
<comment type="similarity">
    <text evidence="6">Belongs to the DEAD box helicase family. MRH4 subfamily.</text>
</comment>
<evidence type="ECO:0000250" key="1"/>
<evidence type="ECO:0000255" key="2"/>
<evidence type="ECO:0000255" key="3">
    <source>
        <dbReference type="PROSITE-ProRule" id="PRU00541"/>
    </source>
</evidence>
<evidence type="ECO:0000255" key="4">
    <source>
        <dbReference type="PROSITE-ProRule" id="PRU00542"/>
    </source>
</evidence>
<evidence type="ECO:0000256" key="5">
    <source>
        <dbReference type="SAM" id="MobiDB-lite"/>
    </source>
</evidence>
<evidence type="ECO:0000305" key="6"/>
<name>MRH4_ASPOR</name>
<feature type="transit peptide" description="Mitochondrion" evidence="2">
    <location>
        <begin position="1"/>
        <end position="40"/>
    </location>
</feature>
<feature type="chain" id="PRO_0000232349" description="ATP-dependent RNA helicase mrh4, mitochondrial">
    <location>
        <begin position="41"/>
        <end position="628"/>
    </location>
</feature>
<feature type="domain" description="Helicase ATP-binding" evidence="3">
    <location>
        <begin position="190"/>
        <end position="402"/>
    </location>
</feature>
<feature type="domain" description="Helicase C-terminal" evidence="4">
    <location>
        <begin position="456"/>
        <end position="628"/>
    </location>
</feature>
<feature type="region of interest" description="Disordered" evidence="5">
    <location>
        <begin position="51"/>
        <end position="109"/>
    </location>
</feature>
<feature type="region of interest" description="Disordered" evidence="5">
    <location>
        <begin position="228"/>
        <end position="260"/>
    </location>
</feature>
<feature type="short sequence motif" description="Q motif">
    <location>
        <begin position="137"/>
        <end position="170"/>
    </location>
</feature>
<feature type="short sequence motif" description="DEAD box">
    <location>
        <begin position="349"/>
        <end position="352"/>
    </location>
</feature>
<feature type="compositionally biased region" description="Basic and acidic residues" evidence="5">
    <location>
        <begin position="92"/>
        <end position="105"/>
    </location>
</feature>
<feature type="compositionally biased region" description="Basic and acidic residues" evidence="5">
    <location>
        <begin position="228"/>
        <end position="253"/>
    </location>
</feature>
<feature type="binding site" evidence="3">
    <location>
        <begin position="203"/>
        <end position="210"/>
    </location>
    <ligand>
        <name>ATP</name>
        <dbReference type="ChEBI" id="CHEBI:30616"/>
    </ligand>
</feature>
<organism>
    <name type="scientific">Aspergillus oryzae (strain ATCC 42149 / RIB 40)</name>
    <name type="common">Yellow koji mold</name>
    <dbReference type="NCBI Taxonomy" id="510516"/>
    <lineage>
        <taxon>Eukaryota</taxon>
        <taxon>Fungi</taxon>
        <taxon>Dikarya</taxon>
        <taxon>Ascomycota</taxon>
        <taxon>Pezizomycotina</taxon>
        <taxon>Eurotiomycetes</taxon>
        <taxon>Eurotiomycetidae</taxon>
        <taxon>Eurotiales</taxon>
        <taxon>Aspergillaceae</taxon>
        <taxon>Aspergillus</taxon>
        <taxon>Aspergillus subgen. Circumdati</taxon>
    </lineage>
</organism>
<proteinExistence type="inferred from homology"/>